<keyword id="KW-1003">Cell membrane</keyword>
<keyword id="KW-1015">Disulfide bond</keyword>
<keyword id="KW-0378">Hydrolase</keyword>
<keyword id="KW-0449">Lipoprotein</keyword>
<keyword id="KW-0472">Membrane</keyword>
<keyword id="KW-0564">Palmitate</keyword>
<keyword id="KW-0732">Signal</keyword>
<keyword id="KW-0843">Virulence</keyword>
<protein>
    <recommendedName>
        <fullName>Resuscitation-promoting factor RpfB</fullName>
        <ecNumber>3.-.-.-</ecNumber>
    </recommendedName>
</protein>
<proteinExistence type="evidence at transcript level"/>
<reference key="1">
    <citation type="journal article" date="2012" name="J. Bacteriol.">
        <title>Complete annotated genome sequence of Mycobacterium tuberculosis Erdman.</title>
        <authorList>
            <person name="Miyoshi-Akiyama T."/>
            <person name="Matsumura K."/>
            <person name="Iwai H."/>
            <person name="Funatogawa K."/>
            <person name="Kirikae T."/>
        </authorList>
    </citation>
    <scope>NUCLEOTIDE SEQUENCE [LARGE SCALE GENOMIC DNA]</scope>
    <source>
        <strain>ATCC 35801 / TMC 107 / Erdman</strain>
    </source>
</reference>
<reference key="2">
    <citation type="journal article" date="2006" name="Infect. Immun.">
        <title>Deletion of the Mycobacterium tuberculosis resuscitation-promoting factor Rv1009 gene results in delayed reactivation from chronic tuberculosis.</title>
        <authorList>
            <person name="Tufariello J.M."/>
            <person name="Mi K."/>
            <person name="Xu J."/>
            <person name="Manabe Y.C."/>
            <person name="Kesavan A.K."/>
            <person name="Drumm J."/>
            <person name="Tanaka K."/>
            <person name="Jacobs W.R. Jr."/>
            <person name="Chan J."/>
        </authorList>
    </citation>
    <scope>INDUCTION</scope>
    <scope>DISRUPTION PHENOTYPE</scope>
    <source>
        <strain>ATCC 35801 / TMC 107 / Erdman</strain>
    </source>
</reference>
<dbReference type="EC" id="3.-.-.-"/>
<dbReference type="EMBL" id="AP012340">
    <property type="protein sequence ID" value="BAL64927.1"/>
    <property type="molecule type" value="Genomic_DNA"/>
</dbReference>
<dbReference type="SMR" id="H8EZH5"/>
<dbReference type="CAZy" id="GH23">
    <property type="family name" value="Glycoside Hydrolase Family 23"/>
</dbReference>
<dbReference type="KEGG" id="mtn:ERDMAN_1122"/>
<dbReference type="PATRIC" id="fig|652616.3.peg.1135"/>
<dbReference type="HOGENOM" id="CLU_036884_1_0_11"/>
<dbReference type="GO" id="GO:0005576">
    <property type="term" value="C:extracellular region"/>
    <property type="evidence" value="ECO:0007669"/>
    <property type="project" value="UniProtKB-ARBA"/>
</dbReference>
<dbReference type="GO" id="GO:0005886">
    <property type="term" value="C:plasma membrane"/>
    <property type="evidence" value="ECO:0007669"/>
    <property type="project" value="UniProtKB-SubCell"/>
</dbReference>
<dbReference type="GO" id="GO:0016787">
    <property type="term" value="F:hydrolase activity"/>
    <property type="evidence" value="ECO:0007669"/>
    <property type="project" value="UniProtKB-KW"/>
</dbReference>
<dbReference type="GO" id="GO:0010629">
    <property type="term" value="P:negative regulation of gene expression"/>
    <property type="evidence" value="ECO:0007669"/>
    <property type="project" value="UniProtKB-ARBA"/>
</dbReference>
<dbReference type="GO" id="GO:0009372">
    <property type="term" value="P:quorum sensing"/>
    <property type="evidence" value="ECO:0007669"/>
    <property type="project" value="UniProtKB-ARBA"/>
</dbReference>
<dbReference type="GO" id="GO:0042127">
    <property type="term" value="P:regulation of cell population proliferation"/>
    <property type="evidence" value="ECO:0007669"/>
    <property type="project" value="UniProtKB-ARBA"/>
</dbReference>
<dbReference type="CDD" id="cd13925">
    <property type="entry name" value="RPF"/>
    <property type="match status" value="1"/>
</dbReference>
<dbReference type="FunFam" id="1.10.530.10:FF:000015">
    <property type="entry name" value="Resuscitation-promoting factor RpfB"/>
    <property type="match status" value="1"/>
</dbReference>
<dbReference type="FunFam" id="2.20.230.10:FF:000003">
    <property type="entry name" value="Resuscitation-promoting factor RpfB"/>
    <property type="match status" value="1"/>
</dbReference>
<dbReference type="Gene3D" id="1.10.530.10">
    <property type="match status" value="1"/>
</dbReference>
<dbReference type="Gene3D" id="2.20.230.10">
    <property type="entry name" value="Resuscitation-promoting factor rpfb"/>
    <property type="match status" value="1"/>
</dbReference>
<dbReference type="InterPro" id="IPR007137">
    <property type="entry name" value="DUF348"/>
</dbReference>
<dbReference type="InterPro" id="IPR011098">
    <property type="entry name" value="G5_dom"/>
</dbReference>
<dbReference type="InterPro" id="IPR023346">
    <property type="entry name" value="Lysozyme-like_dom_sf"/>
</dbReference>
<dbReference type="InterPro" id="IPR051933">
    <property type="entry name" value="Resuscitation_pf_RpfB"/>
</dbReference>
<dbReference type="InterPro" id="IPR010618">
    <property type="entry name" value="RPF"/>
</dbReference>
<dbReference type="PANTHER" id="PTHR39160">
    <property type="entry name" value="CELL WALL-BINDING PROTEIN YOCH"/>
    <property type="match status" value="1"/>
</dbReference>
<dbReference type="PANTHER" id="PTHR39160:SF4">
    <property type="entry name" value="RESUSCITATION-PROMOTING FACTOR RPFB"/>
    <property type="match status" value="1"/>
</dbReference>
<dbReference type="Pfam" id="PF03990">
    <property type="entry name" value="DUF348"/>
    <property type="match status" value="3"/>
</dbReference>
<dbReference type="Pfam" id="PF07501">
    <property type="entry name" value="G5"/>
    <property type="match status" value="1"/>
</dbReference>
<dbReference type="Pfam" id="PF06737">
    <property type="entry name" value="Transglycosylas"/>
    <property type="match status" value="1"/>
</dbReference>
<dbReference type="SMART" id="SM01208">
    <property type="entry name" value="G5"/>
    <property type="match status" value="1"/>
</dbReference>
<dbReference type="SUPFAM" id="SSF53955">
    <property type="entry name" value="Lysozyme-like"/>
    <property type="match status" value="1"/>
</dbReference>
<dbReference type="PROSITE" id="PS51109">
    <property type="entry name" value="G5"/>
    <property type="match status" value="1"/>
</dbReference>
<dbReference type="PROSITE" id="PS51257">
    <property type="entry name" value="PROKAR_LIPOPROTEIN"/>
    <property type="match status" value="1"/>
</dbReference>
<feature type="signal peptide" evidence="2">
    <location>
        <begin position="1"/>
        <end position="23"/>
    </location>
</feature>
<feature type="chain" id="PRO_0000421027" description="Resuscitation-promoting factor RpfB">
    <location>
        <begin position="24"/>
        <end position="362"/>
    </location>
</feature>
<feature type="domain" description="G5" evidence="3">
    <location>
        <begin position="192"/>
        <end position="272"/>
    </location>
</feature>
<feature type="lipid moiety-binding region" description="N-palmitoyl cysteine" evidence="2">
    <location>
        <position position="24"/>
    </location>
</feature>
<feature type="lipid moiety-binding region" description="S-diacylglycerol cysteine" evidence="2">
    <location>
        <position position="24"/>
    </location>
</feature>
<feature type="disulfide bond" evidence="1">
    <location>
        <begin position="291"/>
        <end position="355"/>
    </location>
</feature>
<organism>
    <name type="scientific">Mycobacterium tuberculosis (strain ATCC 35801 / TMC 107 / Erdman)</name>
    <dbReference type="NCBI Taxonomy" id="652616"/>
    <lineage>
        <taxon>Bacteria</taxon>
        <taxon>Bacillati</taxon>
        <taxon>Actinomycetota</taxon>
        <taxon>Actinomycetes</taxon>
        <taxon>Mycobacteriales</taxon>
        <taxon>Mycobacteriaceae</taxon>
        <taxon>Mycobacterium</taxon>
        <taxon>Mycobacterium tuberculosis complex</taxon>
    </lineage>
</organism>
<evidence type="ECO:0000250" key="1"/>
<evidence type="ECO:0000255" key="2">
    <source>
        <dbReference type="PROSITE-ProRule" id="PRU00303"/>
    </source>
</evidence>
<evidence type="ECO:0000255" key="3">
    <source>
        <dbReference type="PROSITE-ProRule" id="PRU00437"/>
    </source>
</evidence>
<evidence type="ECO:0000269" key="4">
    <source>
    </source>
</evidence>
<evidence type="ECO:0000305" key="5"/>
<name>RPFB_MYCTE</name>
<sequence>MLRLVVGALLLVLAFAGGYAVAACKTVTLTVDGTAMRVTTMKSRVIDIVEENGFSVDDRDDLYPAAGVQVHDADTIVLRRSRPLQISLDGHDAKQVWTTASTVDEALAQLAMTDTAPAAASRASRVPLSGMALPVVSAKTVQLNDGGLVRTVHLPAPNVAGLLSAAGVPLLQSDHVVPAATAPIVEGMQIQVTRNRIKKVTERLPLPPNARRVEDPEMNMSREVVEDPGVPGTQDVTFAVAEVNGVETGRLPVANVVVTPAHEAVVRVGTKPGTEVPPVIDGSIWDAIAGCEAGGNWAINTGNGYYGGVQFDQGTWEANGGLRYAPRADLATREEQIAVAEVTRLRQGWGAWPVCAARAGAR</sequence>
<accession>H8EZH5</accession>
<gene>
    <name type="primary">rpfB</name>
    <name type="ordered locus">ERDMAN_1122</name>
</gene>
<comment type="function">
    <text evidence="1">Factor that stimulates resuscitation of dormant cells. Has peptidoglycan (PG) hydrolytic activity. Active in the pM concentration range. Has little to no effect on actively-growing cells. PG fragments could either directly activate the resuscitation pathway of dormant bacteria or serve as a substrate for endogenous Rpf, resulting in low molecular weight products with resuscitation activity (By similarity). Plays a role in reactivating bacteria from chronic tuberculosis (TB) in mice.</text>
</comment>
<comment type="subcellular location">
    <subcellularLocation>
        <location evidence="2">Cell membrane</location>
        <topology evidence="2">Lipid-anchor</topology>
    </subcellularLocation>
</comment>
<comment type="induction">
    <text evidence="4">In infected C57BL/6 mice levels remains constant following reactivation of TB (induced by the nitric oxide synthase inhibitor aminoguanidine) for 4 weeks then decreases over 10-fold until at least 11 weeks.</text>
</comment>
<comment type="disruption phenotype">
    <text evidence="4">No difference in chronic C57BL/6 mouse infection, but infected mice show delayed reactivation of TB (induced by aminoguanidine, a nitric oxide synthase inhibitor) compared to mice infected with wild-type bacteria. Bacterial loads in lung, liver, and spleen are similar during chronic infection, but increase more slowly in the disrupted mutant after reactivation. Pulmonary B-cell responses are reduced in mice infected with the disrupted strain at advanced stages of TB reactivation. While disease is delayed, it does eventually occur, suggesting other the Rpfs compensate.</text>
</comment>
<comment type="similarity">
    <text evidence="5">Belongs to the transglycosylase family. Rpf subfamily.</text>
</comment>